<keyword id="KW-0066">ATP synthesis</keyword>
<keyword id="KW-0375">Hydrogen ion transport</keyword>
<keyword id="KW-0406">Ion transport</keyword>
<keyword id="KW-1185">Reference proteome</keyword>
<keyword id="KW-0813">Transport</keyword>
<organism>
    <name type="scientific">Dictyoglomus turgidum (strain DSM 6724 / Z-1310)</name>
    <dbReference type="NCBI Taxonomy" id="515635"/>
    <lineage>
        <taxon>Bacteria</taxon>
        <taxon>Pseudomonadati</taxon>
        <taxon>Dictyoglomota</taxon>
        <taxon>Dictyoglomia</taxon>
        <taxon>Dictyoglomales</taxon>
        <taxon>Dictyoglomaceae</taxon>
        <taxon>Dictyoglomus</taxon>
    </lineage>
</organism>
<dbReference type="EMBL" id="CP001251">
    <property type="protein sequence ID" value="ACK42778.1"/>
    <property type="molecule type" value="Genomic_DNA"/>
</dbReference>
<dbReference type="RefSeq" id="WP_012583856.1">
    <property type="nucleotide sequence ID" value="NC_011661.1"/>
</dbReference>
<dbReference type="RefSeq" id="YP_002353392.1">
    <property type="nucleotide sequence ID" value="NC_011661.1"/>
</dbReference>
<dbReference type="SMR" id="B8E2D4"/>
<dbReference type="STRING" id="515635.Dtur_1504"/>
<dbReference type="EnsemblBacteria" id="ACK42778">
    <property type="protein sequence ID" value="ACK42778"/>
    <property type="gene ID" value="Dtur_1504"/>
</dbReference>
<dbReference type="KEGG" id="dtu:Dtur_1504"/>
<dbReference type="eggNOG" id="ENOG503450Z">
    <property type="taxonomic scope" value="Bacteria"/>
</dbReference>
<dbReference type="HOGENOM" id="CLU_1438999_0_0_0"/>
<dbReference type="InParanoid" id="B8E2D4"/>
<dbReference type="OrthoDB" id="9815230at2"/>
<dbReference type="Proteomes" id="UP000007719">
    <property type="component" value="Chromosome"/>
</dbReference>
<dbReference type="GO" id="GO:0033178">
    <property type="term" value="C:proton-transporting two-sector ATPase complex, catalytic domain"/>
    <property type="evidence" value="ECO:0007669"/>
    <property type="project" value="InterPro"/>
</dbReference>
<dbReference type="GO" id="GO:0005524">
    <property type="term" value="F:ATP binding"/>
    <property type="evidence" value="ECO:0007669"/>
    <property type="project" value="UniProtKB-UniRule"/>
</dbReference>
<dbReference type="GO" id="GO:0046933">
    <property type="term" value="F:proton-transporting ATP synthase activity, rotational mechanism"/>
    <property type="evidence" value="ECO:0007669"/>
    <property type="project" value="UniProtKB-UniRule"/>
</dbReference>
<dbReference type="GO" id="GO:0046961">
    <property type="term" value="F:proton-transporting ATPase activity, rotational mechanism"/>
    <property type="evidence" value="ECO:0007669"/>
    <property type="project" value="InterPro"/>
</dbReference>
<dbReference type="GO" id="GO:0042777">
    <property type="term" value="P:proton motive force-driven plasma membrane ATP synthesis"/>
    <property type="evidence" value="ECO:0007669"/>
    <property type="project" value="UniProtKB-UniRule"/>
</dbReference>
<dbReference type="HAMAP" id="MF_00311">
    <property type="entry name" value="ATP_synth_E_arch"/>
    <property type="match status" value="1"/>
</dbReference>
<dbReference type="InterPro" id="IPR002842">
    <property type="entry name" value="ATPase_V1_Esu"/>
</dbReference>
<dbReference type="SUPFAM" id="SSF160527">
    <property type="entry name" value="V-type ATPase subunit E-like"/>
    <property type="match status" value="1"/>
</dbReference>
<reference key="1">
    <citation type="journal article" date="2016" name="Front. Microbiol.">
        <title>The complete genome sequence of hyperthermophile Dictyoglomus turgidum DSM 6724 reveals a specialized carbohydrate fermentor.</title>
        <authorList>
            <person name="Brumm P.J."/>
            <person name="Gowda K."/>
            <person name="Robb F.T."/>
            <person name="Mead D.A."/>
        </authorList>
    </citation>
    <scope>NUCLEOTIDE SEQUENCE [LARGE SCALE GENOMIC DNA]</scope>
    <source>
        <strain>DSM 6724 / Z-1310</strain>
    </source>
</reference>
<feature type="chain" id="PRO_1000119530" description="V-type proton ATPase subunit E">
    <location>
        <begin position="1"/>
        <end position="188"/>
    </location>
</feature>
<sequence length="188" mass="21971">MALEKIIEKLENEKKVKIEELRKKREKEYEDFVAKKEKELEEWKEQQRKNLKESLNREESTLLSQLRLKYNTEKARIEAETVNRVKLLLLEKIKSLSNELYNGIWDGFVEKESVKGGEIILAKGEDKIDVDHFCKKYGLVLGKDRVEGKGGFVIQKDNLVIDLTIDTIVEELVNKNILEIAQILRGEK</sequence>
<gene>
    <name evidence="1" type="primary">atpE</name>
    <name type="ordered locus">Dtur_1504</name>
</gene>
<proteinExistence type="inferred from homology"/>
<name>VATE_DICTD</name>
<accession>B8E2D4</accession>
<comment type="function">
    <text evidence="1">Produces ATP from ADP in the presence of a proton gradient across the membrane.</text>
</comment>
<comment type="similarity">
    <text evidence="1">Belongs to the V-ATPase E subunit family.</text>
</comment>
<protein>
    <recommendedName>
        <fullName evidence="1">V-type proton ATPase subunit E</fullName>
    </recommendedName>
    <alternativeName>
        <fullName evidence="1">V-ATPase subunit E</fullName>
    </alternativeName>
</protein>
<evidence type="ECO:0000255" key="1">
    <source>
        <dbReference type="HAMAP-Rule" id="MF_00311"/>
    </source>
</evidence>